<organism>
    <name type="scientific">Shewanella sp. (strain W3-18-1)</name>
    <dbReference type="NCBI Taxonomy" id="351745"/>
    <lineage>
        <taxon>Bacteria</taxon>
        <taxon>Pseudomonadati</taxon>
        <taxon>Pseudomonadota</taxon>
        <taxon>Gammaproteobacteria</taxon>
        <taxon>Alteromonadales</taxon>
        <taxon>Shewanellaceae</taxon>
        <taxon>Shewanella</taxon>
    </lineage>
</organism>
<sequence length="486" mass="51463">MTHYIQGQWHTGNGHDVTSINPANGETIWCGKTATAEQVNAAVEAARAAQFDWFMLGFDARLAIVEAYRSQLEANKAELAETIAQETGKPQWETATEVGAMIGKIALSAAAYHKRTGTEANDTPAGRAVIRHKPHGVVAVFGPYNFPGHLPNGHIVPALLAGNTVIFKPSELTPKVAELMVTLWDKAGLPAGVINLVQGEVDTGKALASHPQIDGLFFTGSSRTGHLLHQQYAGHPGKILALEMGGNNPLIIKGVQDIKAAVHDILQSAYISSGQRCTCARRLYVEQGEQGDALIALLVDAVKQIKVGPWNAQPQPFMGSMISETAAKGMVAAQANLLDLGGKVLVELTHLQAGTGLVSPGLIDVTAIDVLPDEEYFGPLLQLVRYGDFDQAIKLANQTRYGLSAGLLADSREDYDYFLARIRAGIVNWNKQITGASGAAPFGGVGASGNHRASAFYAADYCAYPVASVEADAVSLPATLSPGLSL</sequence>
<keyword id="KW-0056">Arginine metabolism</keyword>
<keyword id="KW-0520">NAD</keyword>
<keyword id="KW-0560">Oxidoreductase</keyword>
<reference key="1">
    <citation type="submission" date="2006-12" db="EMBL/GenBank/DDBJ databases">
        <title>Complete sequence of Shewanella sp. W3-18-1.</title>
        <authorList>
            <consortium name="US DOE Joint Genome Institute"/>
            <person name="Copeland A."/>
            <person name="Lucas S."/>
            <person name="Lapidus A."/>
            <person name="Barry K."/>
            <person name="Detter J.C."/>
            <person name="Glavina del Rio T."/>
            <person name="Hammon N."/>
            <person name="Israni S."/>
            <person name="Dalin E."/>
            <person name="Tice H."/>
            <person name="Pitluck S."/>
            <person name="Chain P."/>
            <person name="Malfatti S."/>
            <person name="Shin M."/>
            <person name="Vergez L."/>
            <person name="Schmutz J."/>
            <person name="Larimer F."/>
            <person name="Land M."/>
            <person name="Hauser L."/>
            <person name="Kyrpides N."/>
            <person name="Lykidis A."/>
            <person name="Tiedje J."/>
            <person name="Richardson P."/>
        </authorList>
    </citation>
    <scope>NUCLEOTIDE SEQUENCE [LARGE SCALE GENOMIC DNA]</scope>
    <source>
        <strain>W3-18-1</strain>
    </source>
</reference>
<evidence type="ECO:0000255" key="1">
    <source>
        <dbReference type="HAMAP-Rule" id="MF_01174"/>
    </source>
</evidence>
<proteinExistence type="inferred from homology"/>
<protein>
    <recommendedName>
        <fullName evidence="1">N-succinylglutamate 5-semialdehyde dehydrogenase</fullName>
        <ecNumber evidence="1">1.2.1.71</ecNumber>
    </recommendedName>
    <alternativeName>
        <fullName evidence="1">Succinylglutamic semialdehyde dehydrogenase</fullName>
        <shortName evidence="1">SGSD</shortName>
    </alternativeName>
</protein>
<gene>
    <name evidence="1" type="primary">astD</name>
    <name type="ordered locus">Sputw3181_3527</name>
</gene>
<comment type="function">
    <text evidence="1">Catalyzes the NAD-dependent reduction of succinylglutamate semialdehyde into succinylglutamate.</text>
</comment>
<comment type="catalytic activity">
    <reaction evidence="1">
        <text>N-succinyl-L-glutamate 5-semialdehyde + NAD(+) + H2O = N-succinyl-L-glutamate + NADH + 2 H(+)</text>
        <dbReference type="Rhea" id="RHEA:10812"/>
        <dbReference type="ChEBI" id="CHEBI:15377"/>
        <dbReference type="ChEBI" id="CHEBI:15378"/>
        <dbReference type="ChEBI" id="CHEBI:57540"/>
        <dbReference type="ChEBI" id="CHEBI:57945"/>
        <dbReference type="ChEBI" id="CHEBI:58520"/>
        <dbReference type="ChEBI" id="CHEBI:58763"/>
        <dbReference type="EC" id="1.2.1.71"/>
    </reaction>
</comment>
<comment type="pathway">
    <text evidence="1">Amino-acid degradation; L-arginine degradation via AST pathway; L-glutamate and succinate from L-arginine: step 4/5.</text>
</comment>
<comment type="similarity">
    <text evidence="1">Belongs to the aldehyde dehydrogenase family. AstD subfamily.</text>
</comment>
<accession>A1RNU4</accession>
<feature type="chain" id="PRO_1000065768" description="N-succinylglutamate 5-semialdehyde dehydrogenase">
    <location>
        <begin position="1"/>
        <end position="486"/>
    </location>
</feature>
<feature type="active site" evidence="1">
    <location>
        <position position="243"/>
    </location>
</feature>
<feature type="active site" evidence="1">
    <location>
        <position position="277"/>
    </location>
</feature>
<feature type="binding site" evidence="1">
    <location>
        <begin position="220"/>
        <end position="225"/>
    </location>
    <ligand>
        <name>NAD(+)</name>
        <dbReference type="ChEBI" id="CHEBI:57540"/>
    </ligand>
</feature>
<dbReference type="EC" id="1.2.1.71" evidence="1"/>
<dbReference type="EMBL" id="CP000503">
    <property type="protein sequence ID" value="ABM26339.1"/>
    <property type="molecule type" value="Genomic_DNA"/>
</dbReference>
<dbReference type="RefSeq" id="WP_011790770.1">
    <property type="nucleotide sequence ID" value="NC_008750.1"/>
</dbReference>
<dbReference type="SMR" id="A1RNU4"/>
<dbReference type="KEGG" id="shw:Sputw3181_3527"/>
<dbReference type="HOGENOM" id="CLU_005391_1_0_6"/>
<dbReference type="UniPathway" id="UPA00185">
    <property type="reaction ID" value="UER00282"/>
</dbReference>
<dbReference type="Proteomes" id="UP000002597">
    <property type="component" value="Chromosome"/>
</dbReference>
<dbReference type="GO" id="GO:0043824">
    <property type="term" value="F:succinylglutamate-semialdehyde dehydrogenase activity"/>
    <property type="evidence" value="ECO:0007669"/>
    <property type="project" value="UniProtKB-EC"/>
</dbReference>
<dbReference type="GO" id="GO:0019544">
    <property type="term" value="P:arginine catabolic process to glutamate"/>
    <property type="evidence" value="ECO:0007669"/>
    <property type="project" value="UniProtKB-UniRule"/>
</dbReference>
<dbReference type="GO" id="GO:0019545">
    <property type="term" value="P:arginine catabolic process to succinate"/>
    <property type="evidence" value="ECO:0007669"/>
    <property type="project" value="UniProtKB-UniRule"/>
</dbReference>
<dbReference type="CDD" id="cd07095">
    <property type="entry name" value="ALDH_SGSD_AstD"/>
    <property type="match status" value="1"/>
</dbReference>
<dbReference type="FunFam" id="3.40.309.10:FF:000013">
    <property type="entry name" value="N-succinylglutamate 5-semialdehyde dehydrogenase"/>
    <property type="match status" value="1"/>
</dbReference>
<dbReference type="FunFam" id="3.40.605.10:FF:000010">
    <property type="entry name" value="N-succinylglutamate 5-semialdehyde dehydrogenase"/>
    <property type="match status" value="1"/>
</dbReference>
<dbReference type="Gene3D" id="3.40.605.10">
    <property type="entry name" value="Aldehyde Dehydrogenase, Chain A, domain 1"/>
    <property type="match status" value="1"/>
</dbReference>
<dbReference type="Gene3D" id="3.40.309.10">
    <property type="entry name" value="Aldehyde Dehydrogenase, Chain A, domain 2"/>
    <property type="match status" value="1"/>
</dbReference>
<dbReference type="HAMAP" id="MF_01174">
    <property type="entry name" value="Aldedh_AstD"/>
    <property type="match status" value="1"/>
</dbReference>
<dbReference type="InterPro" id="IPR016161">
    <property type="entry name" value="Ald_DH/histidinol_DH"/>
</dbReference>
<dbReference type="InterPro" id="IPR016163">
    <property type="entry name" value="Ald_DH_C"/>
</dbReference>
<dbReference type="InterPro" id="IPR016160">
    <property type="entry name" value="Ald_DH_CS_CYS"/>
</dbReference>
<dbReference type="InterPro" id="IPR029510">
    <property type="entry name" value="Ald_DH_CS_GLU"/>
</dbReference>
<dbReference type="InterPro" id="IPR016162">
    <property type="entry name" value="Ald_DH_N"/>
</dbReference>
<dbReference type="InterPro" id="IPR015590">
    <property type="entry name" value="Aldehyde_DH_dom"/>
</dbReference>
<dbReference type="InterPro" id="IPR017649">
    <property type="entry name" value="SuccinylGlu_semiald_DH_AstD"/>
</dbReference>
<dbReference type="NCBIfam" id="TIGR03240">
    <property type="entry name" value="arg_catab_astD"/>
    <property type="match status" value="1"/>
</dbReference>
<dbReference type="NCBIfam" id="NF006992">
    <property type="entry name" value="PRK09457.1"/>
    <property type="match status" value="1"/>
</dbReference>
<dbReference type="PANTHER" id="PTHR11699">
    <property type="entry name" value="ALDEHYDE DEHYDROGENASE-RELATED"/>
    <property type="match status" value="1"/>
</dbReference>
<dbReference type="Pfam" id="PF00171">
    <property type="entry name" value="Aldedh"/>
    <property type="match status" value="1"/>
</dbReference>
<dbReference type="SUPFAM" id="SSF53720">
    <property type="entry name" value="ALDH-like"/>
    <property type="match status" value="1"/>
</dbReference>
<dbReference type="PROSITE" id="PS00070">
    <property type="entry name" value="ALDEHYDE_DEHYDR_CYS"/>
    <property type="match status" value="1"/>
</dbReference>
<dbReference type="PROSITE" id="PS00687">
    <property type="entry name" value="ALDEHYDE_DEHYDR_GLU"/>
    <property type="match status" value="1"/>
</dbReference>
<name>ASTD_SHESW</name>